<reference key="1">
    <citation type="journal article" date="2003" name="J. Bacteriol.">
        <title>Complete genome sequence of the oral pathogenic bacterium Porphyromonas gingivalis strain W83.</title>
        <authorList>
            <person name="Nelson K.E."/>
            <person name="Fleischmann R.D."/>
            <person name="DeBoy R.T."/>
            <person name="Paulsen I.T."/>
            <person name="Fouts D.E."/>
            <person name="Eisen J.A."/>
            <person name="Daugherty S.C."/>
            <person name="Dodson R.J."/>
            <person name="Durkin A.S."/>
            <person name="Gwinn M.L."/>
            <person name="Haft D.H."/>
            <person name="Kolonay J.F."/>
            <person name="Nelson W.C."/>
            <person name="Mason T.M."/>
            <person name="Tallon L."/>
            <person name="Gray J."/>
            <person name="Granger D."/>
            <person name="Tettelin H."/>
            <person name="Dong H."/>
            <person name="Galvin J.L."/>
            <person name="Duncan M.J."/>
            <person name="Dewhirst F.E."/>
            <person name="Fraser C.M."/>
        </authorList>
    </citation>
    <scope>NUCLEOTIDE SEQUENCE [LARGE SCALE GENOMIC DNA]</scope>
    <source>
        <strain>ATCC BAA-308 / W83</strain>
    </source>
</reference>
<proteinExistence type="inferred from homology"/>
<accession>Q7MWI7</accession>
<feature type="chain" id="PRO_0000090264" description="Triosephosphate isomerase">
    <location>
        <begin position="1"/>
        <end position="251"/>
    </location>
</feature>
<feature type="active site" description="Electrophile" evidence="1">
    <location>
        <position position="96"/>
    </location>
</feature>
<feature type="active site" description="Proton acceptor" evidence="1">
    <location>
        <position position="168"/>
    </location>
</feature>
<feature type="binding site" evidence="1">
    <location>
        <begin position="9"/>
        <end position="11"/>
    </location>
    <ligand>
        <name>substrate</name>
    </ligand>
</feature>
<feature type="binding site" evidence="1">
    <location>
        <position position="174"/>
    </location>
    <ligand>
        <name>substrate</name>
    </ligand>
</feature>
<feature type="binding site" evidence="1">
    <location>
        <position position="214"/>
    </location>
    <ligand>
        <name>substrate</name>
    </ligand>
</feature>
<feature type="binding site" evidence="1">
    <location>
        <begin position="235"/>
        <end position="236"/>
    </location>
    <ligand>
        <name>substrate</name>
    </ligand>
</feature>
<gene>
    <name evidence="1" type="primary">tpiA</name>
    <name type="ordered locus">PG_0623</name>
</gene>
<organism>
    <name type="scientific">Porphyromonas gingivalis (strain ATCC BAA-308 / W83)</name>
    <dbReference type="NCBI Taxonomy" id="242619"/>
    <lineage>
        <taxon>Bacteria</taxon>
        <taxon>Pseudomonadati</taxon>
        <taxon>Bacteroidota</taxon>
        <taxon>Bacteroidia</taxon>
        <taxon>Bacteroidales</taxon>
        <taxon>Porphyromonadaceae</taxon>
        <taxon>Porphyromonas</taxon>
    </lineage>
</organism>
<evidence type="ECO:0000255" key="1">
    <source>
        <dbReference type="HAMAP-Rule" id="MF_00147"/>
    </source>
</evidence>
<comment type="function">
    <text evidence="1">Involved in the gluconeogenesis. Catalyzes stereospecifically the conversion of dihydroxyacetone phosphate (DHAP) to D-glyceraldehyde-3-phosphate (G3P).</text>
</comment>
<comment type="catalytic activity">
    <reaction evidence="1">
        <text>D-glyceraldehyde 3-phosphate = dihydroxyacetone phosphate</text>
        <dbReference type="Rhea" id="RHEA:18585"/>
        <dbReference type="ChEBI" id="CHEBI:57642"/>
        <dbReference type="ChEBI" id="CHEBI:59776"/>
        <dbReference type="EC" id="5.3.1.1"/>
    </reaction>
</comment>
<comment type="pathway">
    <text evidence="1">Carbohydrate biosynthesis; gluconeogenesis.</text>
</comment>
<comment type="pathway">
    <text evidence="1">Carbohydrate degradation; glycolysis; D-glyceraldehyde 3-phosphate from glycerone phosphate: step 1/1.</text>
</comment>
<comment type="subunit">
    <text evidence="1">Homodimer.</text>
</comment>
<comment type="subcellular location">
    <subcellularLocation>
        <location evidence="1">Cytoplasm</location>
    </subcellularLocation>
</comment>
<comment type="similarity">
    <text evidence="1">Belongs to the triosephosphate isomerase family.</text>
</comment>
<keyword id="KW-0963">Cytoplasm</keyword>
<keyword id="KW-0312">Gluconeogenesis</keyword>
<keyword id="KW-0324">Glycolysis</keyword>
<keyword id="KW-0413">Isomerase</keyword>
<keyword id="KW-1185">Reference proteome</keyword>
<name>TPIS_PORGI</name>
<sequence>MRKNIVAGNWKMNKTLQEGLALAKELDAALKGRTINCDVIIGTPFIHLASIAAAIDTTRIGVAAENCADKESGAYTGEVSAAMVASTGARYVIIGHSERRAYYHETSPILMEKVKLALSNGLTPIFCVGEVLEEREAGKHFEVVARQVEEALFTLDQTDFAKLILAYEPVWAIGTGKTATADQAQEMHAHIRKSIAAKYGKEVANGCSILYGGSCNAANAKELFSRADVDGGLIGGASLSVDKFLPIIEAF</sequence>
<dbReference type="EC" id="5.3.1.1" evidence="1"/>
<dbReference type="EMBL" id="AE015924">
    <property type="protein sequence ID" value="AAQ65807.1"/>
    <property type="molecule type" value="Genomic_DNA"/>
</dbReference>
<dbReference type="RefSeq" id="WP_005874525.1">
    <property type="nucleotide sequence ID" value="NC_002950.2"/>
</dbReference>
<dbReference type="SMR" id="Q7MWI7"/>
<dbReference type="STRING" id="242619.PG_0623"/>
<dbReference type="EnsemblBacteria" id="AAQ65807">
    <property type="protein sequence ID" value="AAQ65807"/>
    <property type="gene ID" value="PG_0623"/>
</dbReference>
<dbReference type="KEGG" id="pgi:PG_0623"/>
<dbReference type="eggNOG" id="COG0149">
    <property type="taxonomic scope" value="Bacteria"/>
</dbReference>
<dbReference type="HOGENOM" id="CLU_024251_2_3_10"/>
<dbReference type="UniPathway" id="UPA00109">
    <property type="reaction ID" value="UER00189"/>
</dbReference>
<dbReference type="UniPathway" id="UPA00138"/>
<dbReference type="Proteomes" id="UP000000588">
    <property type="component" value="Chromosome"/>
</dbReference>
<dbReference type="GO" id="GO:0005829">
    <property type="term" value="C:cytosol"/>
    <property type="evidence" value="ECO:0007669"/>
    <property type="project" value="TreeGrafter"/>
</dbReference>
<dbReference type="GO" id="GO:0004807">
    <property type="term" value="F:triose-phosphate isomerase activity"/>
    <property type="evidence" value="ECO:0007669"/>
    <property type="project" value="UniProtKB-UniRule"/>
</dbReference>
<dbReference type="GO" id="GO:0006094">
    <property type="term" value="P:gluconeogenesis"/>
    <property type="evidence" value="ECO:0007669"/>
    <property type="project" value="UniProtKB-UniRule"/>
</dbReference>
<dbReference type="GO" id="GO:0046166">
    <property type="term" value="P:glyceraldehyde-3-phosphate biosynthetic process"/>
    <property type="evidence" value="ECO:0007669"/>
    <property type="project" value="TreeGrafter"/>
</dbReference>
<dbReference type="GO" id="GO:0019563">
    <property type="term" value="P:glycerol catabolic process"/>
    <property type="evidence" value="ECO:0007669"/>
    <property type="project" value="TreeGrafter"/>
</dbReference>
<dbReference type="GO" id="GO:0006096">
    <property type="term" value="P:glycolytic process"/>
    <property type="evidence" value="ECO:0007669"/>
    <property type="project" value="UniProtKB-UniRule"/>
</dbReference>
<dbReference type="CDD" id="cd00311">
    <property type="entry name" value="TIM"/>
    <property type="match status" value="1"/>
</dbReference>
<dbReference type="FunFam" id="3.20.20.70:FF:000016">
    <property type="entry name" value="Triosephosphate isomerase"/>
    <property type="match status" value="1"/>
</dbReference>
<dbReference type="Gene3D" id="3.20.20.70">
    <property type="entry name" value="Aldolase class I"/>
    <property type="match status" value="1"/>
</dbReference>
<dbReference type="HAMAP" id="MF_00147_B">
    <property type="entry name" value="TIM_B"/>
    <property type="match status" value="1"/>
</dbReference>
<dbReference type="InterPro" id="IPR013785">
    <property type="entry name" value="Aldolase_TIM"/>
</dbReference>
<dbReference type="InterPro" id="IPR035990">
    <property type="entry name" value="TIM_sf"/>
</dbReference>
<dbReference type="InterPro" id="IPR022896">
    <property type="entry name" value="TrioseP_Isoase_bac/euk"/>
</dbReference>
<dbReference type="InterPro" id="IPR000652">
    <property type="entry name" value="Triosephosphate_isomerase"/>
</dbReference>
<dbReference type="InterPro" id="IPR020861">
    <property type="entry name" value="Triosephosphate_isomerase_AS"/>
</dbReference>
<dbReference type="NCBIfam" id="TIGR00419">
    <property type="entry name" value="tim"/>
    <property type="match status" value="1"/>
</dbReference>
<dbReference type="PANTHER" id="PTHR21139">
    <property type="entry name" value="TRIOSEPHOSPHATE ISOMERASE"/>
    <property type="match status" value="1"/>
</dbReference>
<dbReference type="PANTHER" id="PTHR21139:SF42">
    <property type="entry name" value="TRIOSEPHOSPHATE ISOMERASE"/>
    <property type="match status" value="1"/>
</dbReference>
<dbReference type="Pfam" id="PF00121">
    <property type="entry name" value="TIM"/>
    <property type="match status" value="1"/>
</dbReference>
<dbReference type="SUPFAM" id="SSF51351">
    <property type="entry name" value="Triosephosphate isomerase (TIM)"/>
    <property type="match status" value="1"/>
</dbReference>
<dbReference type="PROSITE" id="PS00171">
    <property type="entry name" value="TIM_1"/>
    <property type="match status" value="1"/>
</dbReference>
<dbReference type="PROSITE" id="PS51440">
    <property type="entry name" value="TIM_2"/>
    <property type="match status" value="1"/>
</dbReference>
<protein>
    <recommendedName>
        <fullName evidence="1">Triosephosphate isomerase</fullName>
        <shortName evidence="1">TIM</shortName>
        <shortName evidence="1">TPI</shortName>
        <ecNumber evidence="1">5.3.1.1</ecNumber>
    </recommendedName>
    <alternativeName>
        <fullName evidence="1">Triose-phosphate isomerase</fullName>
    </alternativeName>
</protein>